<gene>
    <name type="primary">hisA</name>
    <name type="ordered locus">AF_0986</name>
</gene>
<dbReference type="EC" id="5.3.1.16"/>
<dbReference type="EMBL" id="AE000782">
    <property type="protein sequence ID" value="AAB90257.1"/>
    <property type="molecule type" value="Genomic_DNA"/>
</dbReference>
<dbReference type="PIR" id="B69373">
    <property type="entry name" value="B69373"/>
</dbReference>
<dbReference type="RefSeq" id="WP_010878486.1">
    <property type="nucleotide sequence ID" value="NC_000917.1"/>
</dbReference>
<dbReference type="SMR" id="O29276"/>
<dbReference type="STRING" id="224325.AF_0986"/>
<dbReference type="PaxDb" id="224325-AF_0986"/>
<dbReference type="EnsemblBacteria" id="AAB90257">
    <property type="protein sequence ID" value="AAB90257"/>
    <property type="gene ID" value="AF_0986"/>
</dbReference>
<dbReference type="GeneID" id="24794588"/>
<dbReference type="KEGG" id="afu:AF_0986"/>
<dbReference type="eggNOG" id="arCOG00618">
    <property type="taxonomic scope" value="Archaea"/>
</dbReference>
<dbReference type="HOGENOM" id="CLU_048577_1_1_2"/>
<dbReference type="OrthoDB" id="52866at2157"/>
<dbReference type="PhylomeDB" id="O29276"/>
<dbReference type="UniPathway" id="UPA00031">
    <property type="reaction ID" value="UER00009"/>
</dbReference>
<dbReference type="Proteomes" id="UP000002199">
    <property type="component" value="Chromosome"/>
</dbReference>
<dbReference type="GO" id="GO:0005737">
    <property type="term" value="C:cytoplasm"/>
    <property type="evidence" value="ECO:0007669"/>
    <property type="project" value="UniProtKB-SubCell"/>
</dbReference>
<dbReference type="GO" id="GO:0003949">
    <property type="term" value="F:1-(5-phosphoribosyl)-5-[(5-phosphoribosylamino)methylideneamino]imidazole-4-carboxamide isomerase activity"/>
    <property type="evidence" value="ECO:0007669"/>
    <property type="project" value="UniProtKB-UniRule"/>
</dbReference>
<dbReference type="GO" id="GO:0000105">
    <property type="term" value="P:L-histidine biosynthetic process"/>
    <property type="evidence" value="ECO:0007669"/>
    <property type="project" value="UniProtKB-UniRule"/>
</dbReference>
<dbReference type="GO" id="GO:0000162">
    <property type="term" value="P:L-tryptophan biosynthetic process"/>
    <property type="evidence" value="ECO:0007669"/>
    <property type="project" value="TreeGrafter"/>
</dbReference>
<dbReference type="CDD" id="cd04732">
    <property type="entry name" value="HisA"/>
    <property type="match status" value="1"/>
</dbReference>
<dbReference type="FunFam" id="3.20.20.70:FF:000009">
    <property type="entry name" value="1-(5-phosphoribosyl)-5-[(5-phosphoribosylamino)methylideneamino] imidazole-4-carboxamide isomerase"/>
    <property type="match status" value="1"/>
</dbReference>
<dbReference type="Gene3D" id="3.20.20.70">
    <property type="entry name" value="Aldolase class I"/>
    <property type="match status" value="1"/>
</dbReference>
<dbReference type="HAMAP" id="MF_01014">
    <property type="entry name" value="HisA"/>
    <property type="match status" value="1"/>
</dbReference>
<dbReference type="InterPro" id="IPR013785">
    <property type="entry name" value="Aldolase_TIM"/>
</dbReference>
<dbReference type="InterPro" id="IPR006062">
    <property type="entry name" value="His_biosynth"/>
</dbReference>
<dbReference type="InterPro" id="IPR006063">
    <property type="entry name" value="HisA_bact_arch"/>
</dbReference>
<dbReference type="InterPro" id="IPR044524">
    <property type="entry name" value="Isoase_HisA-like"/>
</dbReference>
<dbReference type="InterPro" id="IPR023016">
    <property type="entry name" value="Isoase_HisA-like_bact"/>
</dbReference>
<dbReference type="InterPro" id="IPR011060">
    <property type="entry name" value="RibuloseP-bd_barrel"/>
</dbReference>
<dbReference type="NCBIfam" id="TIGR00007">
    <property type="entry name" value="1-(5-phosphoribosyl)-5-[(5-phosphoribosylamino)methylideneamino]imidazole-4-carboxamide isomerase"/>
    <property type="match status" value="1"/>
</dbReference>
<dbReference type="NCBIfam" id="NF010112">
    <property type="entry name" value="PRK13585.1"/>
    <property type="match status" value="1"/>
</dbReference>
<dbReference type="PANTHER" id="PTHR43090">
    <property type="entry name" value="1-(5-PHOSPHORIBOSYL)-5-[(5-PHOSPHORIBOSYLAMINO)METHYLIDENEAMINO] IMIDAZOLE-4-CARBOXAMIDE ISOMERASE"/>
    <property type="match status" value="1"/>
</dbReference>
<dbReference type="PANTHER" id="PTHR43090:SF2">
    <property type="entry name" value="1-(5-PHOSPHORIBOSYL)-5-[(5-PHOSPHORIBOSYLAMINO)METHYLIDENEAMINO] IMIDAZOLE-4-CARBOXAMIDE ISOMERASE"/>
    <property type="match status" value="1"/>
</dbReference>
<dbReference type="Pfam" id="PF00977">
    <property type="entry name" value="His_biosynth"/>
    <property type="match status" value="1"/>
</dbReference>
<dbReference type="SUPFAM" id="SSF51366">
    <property type="entry name" value="Ribulose-phoshate binding barrel"/>
    <property type="match status" value="1"/>
</dbReference>
<comment type="catalytic activity">
    <reaction>
        <text>1-(5-phospho-beta-D-ribosyl)-5-[(5-phospho-beta-D-ribosylamino)methylideneamino]imidazole-4-carboxamide = 5-[(5-phospho-1-deoxy-D-ribulos-1-ylimino)methylamino]-1-(5-phospho-beta-D-ribosyl)imidazole-4-carboxamide</text>
        <dbReference type="Rhea" id="RHEA:15469"/>
        <dbReference type="ChEBI" id="CHEBI:58435"/>
        <dbReference type="ChEBI" id="CHEBI:58525"/>
        <dbReference type="EC" id="5.3.1.16"/>
    </reaction>
</comment>
<comment type="pathway">
    <text>Amino-acid biosynthesis; L-histidine biosynthesis; L-histidine from 5-phospho-alpha-D-ribose 1-diphosphate: step 4/9.</text>
</comment>
<comment type="subcellular location">
    <subcellularLocation>
        <location evidence="1">Cytoplasm</location>
    </subcellularLocation>
</comment>
<comment type="similarity">
    <text evidence="2">Belongs to the HisA/HisF family.</text>
</comment>
<organism>
    <name type="scientific">Archaeoglobus fulgidus (strain ATCC 49558 / DSM 4304 / JCM 9628 / NBRC 100126 / VC-16)</name>
    <dbReference type="NCBI Taxonomy" id="224325"/>
    <lineage>
        <taxon>Archaea</taxon>
        <taxon>Methanobacteriati</taxon>
        <taxon>Methanobacteriota</taxon>
        <taxon>Archaeoglobi</taxon>
        <taxon>Archaeoglobales</taxon>
        <taxon>Archaeoglobaceae</taxon>
        <taxon>Archaeoglobus</taxon>
    </lineage>
</organism>
<proteinExistence type="inferred from homology"/>
<feature type="chain" id="PRO_0000142088" description="1-(5-phosphoribosyl)-5-[(5-phosphoribosylamino)methylideneamino] imidazole-4-carboxamide isomerase">
    <location>
        <begin position="1"/>
        <end position="238"/>
    </location>
</feature>
<feature type="active site" description="Proton acceptor" evidence="1">
    <location>
        <position position="9"/>
    </location>
</feature>
<feature type="active site" description="Proton donor" evidence="1">
    <location>
        <position position="128"/>
    </location>
</feature>
<protein>
    <recommendedName>
        <fullName>1-(5-phosphoribosyl)-5-[(5-phosphoribosylamino)methylideneamino] imidazole-4-carboxamide isomerase</fullName>
        <ecNumber>5.3.1.16</ecNumber>
    </recommendedName>
    <alternativeName>
        <fullName>Phosphoribosylformimino-5-aminoimidazole carboxamide ribotide isomerase</fullName>
    </alternativeName>
</protein>
<accession>O29276</accession>
<keyword id="KW-0028">Amino-acid biosynthesis</keyword>
<keyword id="KW-0963">Cytoplasm</keyword>
<keyword id="KW-0368">Histidine biosynthesis</keyword>
<keyword id="KW-0413">Isomerase</keyword>
<keyword id="KW-1185">Reference proteome</keyword>
<sequence length="238" mass="26698">MFRVIPAIDLKDGKVVRLRQGKEDEVTFEATNPIEVAKQWVEIGAKVLHVIDLSGAFQGRLRHEEIIAEIAKMAEVQVGGGIRDFRVAERLFELGVDRVIFGTIAVERVEELREFAKKWKGRVMVAIDSKKGRVAVKGWKEVVELTPVQLAELYDDLDVSFLYTNIDVEGLVSGIERERIEEVVKSLRNPVYVAGGISSIEDIRFAKRVGAAGVVIGSALYTKKLKFEEAIKVEYEKV</sequence>
<evidence type="ECO:0000250" key="1"/>
<evidence type="ECO:0000305" key="2"/>
<reference key="1">
    <citation type="journal article" date="1997" name="Nature">
        <title>The complete genome sequence of the hyperthermophilic, sulphate-reducing archaeon Archaeoglobus fulgidus.</title>
        <authorList>
            <person name="Klenk H.-P."/>
            <person name="Clayton R.A."/>
            <person name="Tomb J.-F."/>
            <person name="White O."/>
            <person name="Nelson K.E."/>
            <person name="Ketchum K.A."/>
            <person name="Dodson R.J."/>
            <person name="Gwinn M.L."/>
            <person name="Hickey E.K."/>
            <person name="Peterson J.D."/>
            <person name="Richardson D.L."/>
            <person name="Kerlavage A.R."/>
            <person name="Graham D.E."/>
            <person name="Kyrpides N.C."/>
            <person name="Fleischmann R.D."/>
            <person name="Quackenbush J."/>
            <person name="Lee N.H."/>
            <person name="Sutton G.G."/>
            <person name="Gill S.R."/>
            <person name="Kirkness E.F."/>
            <person name="Dougherty B.A."/>
            <person name="McKenney K."/>
            <person name="Adams M.D."/>
            <person name="Loftus B.J."/>
            <person name="Peterson S.N."/>
            <person name="Reich C.I."/>
            <person name="McNeil L.K."/>
            <person name="Badger J.H."/>
            <person name="Glodek A."/>
            <person name="Zhou L."/>
            <person name="Overbeek R."/>
            <person name="Gocayne J.D."/>
            <person name="Weidman J.F."/>
            <person name="McDonald L.A."/>
            <person name="Utterback T.R."/>
            <person name="Cotton M.D."/>
            <person name="Spriggs T."/>
            <person name="Artiach P."/>
            <person name="Kaine B.P."/>
            <person name="Sykes S.M."/>
            <person name="Sadow P.W."/>
            <person name="D'Andrea K.P."/>
            <person name="Bowman C."/>
            <person name="Fujii C."/>
            <person name="Garland S.A."/>
            <person name="Mason T.M."/>
            <person name="Olsen G.J."/>
            <person name="Fraser C.M."/>
            <person name="Smith H.O."/>
            <person name="Woese C.R."/>
            <person name="Venter J.C."/>
        </authorList>
    </citation>
    <scope>NUCLEOTIDE SEQUENCE [LARGE SCALE GENOMIC DNA]</scope>
    <source>
        <strain>ATCC 49558 / DSM 4304 / JCM 9628 / NBRC 100126 / VC-16</strain>
    </source>
</reference>
<name>HIS4_ARCFU</name>